<sequence length="482" mass="54494">MDFYTTDINKNVVPLFSKGTVARTASKAQYPSWCNNALKLTNILLKSLRCKFQTNRCEDDRGFEVYCVILKSIALLMAAKESLILLQIPPSLPSGFPFRSPQLSFTYLSTRLSGSQHKSTHSHHINHQTHPIHSSSSNSNSNNRIPTKTDSSKQHTQHFSFANAGASNRDELLSIVRKIDKSNLKCCDCGSTATVEWVSINLLCILCIKCSGVHRSLGSHISKIRSLTLDNFTSLELMHLLQNNVSNSNVNAIYESNLRNFPVKKITANSDDSERSKFIIDKYQFKKFVIDSNQGREASLKSLIKAIHLDSVFMMQRAIAQSKYSLRELTASEKEQNDLNHSSIFQYSLKHYEIVDGTPIFFITEFLLCNGIHIDNLPKITTNWSPKVLEYWETKLEMYGTFQAVNTSRPRSGPHLNMHSNVDSASSYNKKHDLRVNIPERSASASKRWSLSSIPKSSQNLMSPTNLLTMHKSLKLAKKDKK</sequence>
<keyword id="KW-0963">Cytoplasm</keyword>
<keyword id="KW-0343">GTPase activation</keyword>
<keyword id="KW-0479">Metal-binding</keyword>
<keyword id="KW-0653">Protein transport</keyword>
<keyword id="KW-1185">Reference proteome</keyword>
<keyword id="KW-0813">Transport</keyword>
<keyword id="KW-0862">Zinc</keyword>
<keyword id="KW-0863">Zinc-finger</keyword>
<reference key="1">
    <citation type="journal article" date="1997" name="Nature">
        <title>The nucleotide sequence of Saccharomyces cerevisiae chromosome IV.</title>
        <authorList>
            <person name="Jacq C."/>
            <person name="Alt-Moerbe J."/>
            <person name="Andre B."/>
            <person name="Arnold W."/>
            <person name="Bahr A."/>
            <person name="Ballesta J.P.G."/>
            <person name="Bargues M."/>
            <person name="Baron L."/>
            <person name="Becker A."/>
            <person name="Biteau N."/>
            <person name="Bloecker H."/>
            <person name="Blugeon C."/>
            <person name="Boskovic J."/>
            <person name="Brandt P."/>
            <person name="Brueckner M."/>
            <person name="Buitrago M.J."/>
            <person name="Coster F."/>
            <person name="Delaveau T."/>
            <person name="del Rey F."/>
            <person name="Dujon B."/>
            <person name="Eide L.G."/>
            <person name="Garcia-Cantalejo J.M."/>
            <person name="Goffeau A."/>
            <person name="Gomez-Peris A."/>
            <person name="Granotier C."/>
            <person name="Hanemann V."/>
            <person name="Hankeln T."/>
            <person name="Hoheisel J.D."/>
            <person name="Jaeger W."/>
            <person name="Jimenez A."/>
            <person name="Jonniaux J.-L."/>
            <person name="Kraemer C."/>
            <person name="Kuester H."/>
            <person name="Laamanen P."/>
            <person name="Legros Y."/>
            <person name="Louis E.J."/>
            <person name="Moeller-Rieker S."/>
            <person name="Monnet A."/>
            <person name="Moro M."/>
            <person name="Mueller-Auer S."/>
            <person name="Nussbaumer B."/>
            <person name="Paricio N."/>
            <person name="Paulin L."/>
            <person name="Perea J."/>
            <person name="Perez-Alonso M."/>
            <person name="Perez-Ortin J.E."/>
            <person name="Pohl T.M."/>
            <person name="Prydz H."/>
            <person name="Purnelle B."/>
            <person name="Rasmussen S.W."/>
            <person name="Remacha M.A."/>
            <person name="Revuelta J.L."/>
            <person name="Rieger M."/>
            <person name="Salom D."/>
            <person name="Saluz H.P."/>
            <person name="Saiz J.E."/>
            <person name="Saren A.-M."/>
            <person name="Schaefer M."/>
            <person name="Scharfe M."/>
            <person name="Schmidt E.R."/>
            <person name="Schneider C."/>
            <person name="Scholler P."/>
            <person name="Schwarz S."/>
            <person name="Soler-Mira A."/>
            <person name="Urrestarazu L.A."/>
            <person name="Verhasselt P."/>
            <person name="Vissers S."/>
            <person name="Voet M."/>
            <person name="Volckaert G."/>
            <person name="Wagner G."/>
            <person name="Wambutt R."/>
            <person name="Wedler E."/>
            <person name="Wedler H."/>
            <person name="Woelfl S."/>
            <person name="Harris D.E."/>
            <person name="Bowman S."/>
            <person name="Brown D."/>
            <person name="Churcher C.M."/>
            <person name="Connor R."/>
            <person name="Dedman K."/>
            <person name="Gentles S."/>
            <person name="Hamlin N."/>
            <person name="Hunt S."/>
            <person name="Jones L."/>
            <person name="McDonald S."/>
            <person name="Murphy L.D."/>
            <person name="Niblett D."/>
            <person name="Odell C."/>
            <person name="Oliver K."/>
            <person name="Rajandream M.A."/>
            <person name="Richards C."/>
            <person name="Shore L."/>
            <person name="Walsh S.V."/>
            <person name="Barrell B.G."/>
            <person name="Dietrich F.S."/>
            <person name="Mulligan J.T."/>
            <person name="Allen E."/>
            <person name="Araujo R."/>
            <person name="Aviles E."/>
            <person name="Berno A."/>
            <person name="Carpenter J."/>
            <person name="Chen E."/>
            <person name="Cherry J.M."/>
            <person name="Chung E."/>
            <person name="Duncan M."/>
            <person name="Hunicke-Smith S."/>
            <person name="Hyman R.W."/>
            <person name="Komp C."/>
            <person name="Lashkari D."/>
            <person name="Lew H."/>
            <person name="Lin D."/>
            <person name="Mosedale D."/>
            <person name="Nakahara K."/>
            <person name="Namath A."/>
            <person name="Oefner P."/>
            <person name="Oh C."/>
            <person name="Petel F.X."/>
            <person name="Roberts D."/>
            <person name="Schramm S."/>
            <person name="Schroeder M."/>
            <person name="Shogren T."/>
            <person name="Shroff N."/>
            <person name="Winant A."/>
            <person name="Yelton M.A."/>
            <person name="Botstein D."/>
            <person name="Davis R.W."/>
            <person name="Johnston M."/>
            <person name="Andrews S."/>
            <person name="Brinkman R."/>
            <person name="Cooper J."/>
            <person name="Ding H."/>
            <person name="Du Z."/>
            <person name="Favello A."/>
            <person name="Fulton L."/>
            <person name="Gattung S."/>
            <person name="Greco T."/>
            <person name="Hallsworth K."/>
            <person name="Hawkins J."/>
            <person name="Hillier L.W."/>
            <person name="Jier M."/>
            <person name="Johnson D."/>
            <person name="Johnston L."/>
            <person name="Kirsten J."/>
            <person name="Kucaba T."/>
            <person name="Langston Y."/>
            <person name="Latreille P."/>
            <person name="Le T."/>
            <person name="Mardis E."/>
            <person name="Menezes S."/>
            <person name="Miller N."/>
            <person name="Nhan M."/>
            <person name="Pauley A."/>
            <person name="Peluso D."/>
            <person name="Rifkin L."/>
            <person name="Riles L."/>
            <person name="Taich A."/>
            <person name="Trevaskis E."/>
            <person name="Vignati D."/>
            <person name="Wilcox L."/>
            <person name="Wohldman P."/>
            <person name="Vaudin M."/>
            <person name="Wilson R."/>
            <person name="Waterston R."/>
            <person name="Albermann K."/>
            <person name="Hani J."/>
            <person name="Heumann K."/>
            <person name="Kleine K."/>
            <person name="Mewes H.-W."/>
            <person name="Zollner A."/>
            <person name="Zaccaria P."/>
        </authorList>
    </citation>
    <scope>NUCLEOTIDE SEQUENCE [LARGE SCALE GENOMIC DNA]</scope>
    <source>
        <strain>ATCC 204508 / S288c</strain>
    </source>
</reference>
<reference key="2">
    <citation type="journal article" date="2014" name="G3 (Bethesda)">
        <title>The reference genome sequence of Saccharomyces cerevisiae: Then and now.</title>
        <authorList>
            <person name="Engel S.R."/>
            <person name="Dietrich F.S."/>
            <person name="Fisk D.G."/>
            <person name="Binkley G."/>
            <person name="Balakrishnan R."/>
            <person name="Costanzo M.C."/>
            <person name="Dwight S.S."/>
            <person name="Hitz B.C."/>
            <person name="Karra K."/>
            <person name="Nash R.S."/>
            <person name="Weng S."/>
            <person name="Wong E.D."/>
            <person name="Lloyd P."/>
            <person name="Skrzypek M.S."/>
            <person name="Miyasato S.R."/>
            <person name="Simison M."/>
            <person name="Cherry J.M."/>
        </authorList>
    </citation>
    <scope>GENOME REANNOTATION</scope>
    <source>
        <strain>ATCC 204508 / S288c</strain>
    </source>
</reference>
<reference key="3">
    <citation type="journal article" date="1998" name="J. Biol. Chem.">
        <title>A family of Arf effectors defined as suppressors of the loss of Arf function in the yeast Saccharomyces cerevisiae.</title>
        <authorList>
            <person name="Zhang C.-J."/>
            <person name="Cavenagh M.M."/>
            <person name="Kahn R.A."/>
        </authorList>
    </citation>
    <scope>FUNCTION</scope>
</reference>
<reference key="4">
    <citation type="journal article" date="2003" name="Nature">
        <title>Global analysis of protein localization in budding yeast.</title>
        <authorList>
            <person name="Huh W.-K."/>
            <person name="Falvo J.V."/>
            <person name="Gerke L.C."/>
            <person name="Carroll A.S."/>
            <person name="Howson R.W."/>
            <person name="Weissman J.S."/>
            <person name="O'Shea E.K."/>
        </authorList>
    </citation>
    <scope>SUBCELLULAR LOCATION [LARGE SCALE ANALYSIS]</scope>
</reference>
<reference key="5">
    <citation type="journal article" date="2003" name="Nature">
        <title>Global analysis of protein expression in yeast.</title>
        <authorList>
            <person name="Ghaemmaghami S."/>
            <person name="Huh W.-K."/>
            <person name="Bower K."/>
            <person name="Howson R.W."/>
            <person name="Belle A."/>
            <person name="Dephoure N."/>
            <person name="O'Shea E.K."/>
            <person name="Weissman J.S."/>
        </authorList>
    </citation>
    <scope>LEVEL OF PROTEIN EXPRESSION [LARGE SCALE ANALYSIS]</scope>
</reference>
<reference key="6">
    <citation type="journal article" date="2003" name="Yeast">
        <title>Four ARF GAPs in Saccharomyces cerevisiae have both overlapping and distinct functions.</title>
        <authorList>
            <person name="Zhang C.-J."/>
            <person name="Bowzard J.B."/>
            <person name="Anido A."/>
            <person name="Kahn R.A."/>
        </authorList>
    </citation>
    <scope>FUNCTION</scope>
</reference>
<dbReference type="EMBL" id="U33057">
    <property type="protein sequence ID" value="AAB64964.1"/>
    <property type="molecule type" value="Genomic_DNA"/>
</dbReference>
<dbReference type="EMBL" id="BK006938">
    <property type="protein sequence ID" value="DAA12354.1"/>
    <property type="molecule type" value="Genomic_DNA"/>
</dbReference>
<dbReference type="PIR" id="S69580">
    <property type="entry name" value="S69580"/>
</dbReference>
<dbReference type="RefSeq" id="NP_010812.3">
    <property type="nucleotide sequence ID" value="NM_001180832.3"/>
</dbReference>
<dbReference type="SMR" id="Q04412"/>
<dbReference type="BioGRID" id="32574">
    <property type="interactions" value="88"/>
</dbReference>
<dbReference type="DIP" id="DIP-5273N"/>
<dbReference type="FunCoup" id="Q04412">
    <property type="interactions" value="154"/>
</dbReference>
<dbReference type="IntAct" id="Q04412">
    <property type="interactions" value="3"/>
</dbReference>
<dbReference type="MINT" id="Q04412"/>
<dbReference type="STRING" id="4932.YDR524C"/>
<dbReference type="iPTMnet" id="Q04412"/>
<dbReference type="PaxDb" id="4932-YDR524C"/>
<dbReference type="PeptideAtlas" id="Q04412"/>
<dbReference type="EnsemblFungi" id="YDR524C_mRNA">
    <property type="protein sequence ID" value="YDR524C"/>
    <property type="gene ID" value="YDR524C"/>
</dbReference>
<dbReference type="GeneID" id="852136"/>
<dbReference type="KEGG" id="sce:YDR524C"/>
<dbReference type="AGR" id="SGD:S000002932"/>
<dbReference type="SGD" id="S000002932">
    <property type="gene designation" value="AGE1"/>
</dbReference>
<dbReference type="VEuPathDB" id="FungiDB:YDR524C"/>
<dbReference type="eggNOG" id="KOG0521">
    <property type="taxonomic scope" value="Eukaryota"/>
</dbReference>
<dbReference type="GeneTree" id="ENSGT00940000169062"/>
<dbReference type="HOGENOM" id="CLU_493595_0_0_1"/>
<dbReference type="InParanoid" id="Q04412"/>
<dbReference type="OMA" id="THSHHIN"/>
<dbReference type="OrthoDB" id="10266696at2759"/>
<dbReference type="BioCyc" id="YEAST:G3O-30040-MONOMER"/>
<dbReference type="BioGRID-ORCS" id="852136">
    <property type="hits" value="2 hits in 10 CRISPR screens"/>
</dbReference>
<dbReference type="PRO" id="PR:Q04412"/>
<dbReference type="Proteomes" id="UP000002311">
    <property type="component" value="Chromosome IV"/>
</dbReference>
<dbReference type="RNAct" id="Q04412">
    <property type="molecule type" value="protein"/>
</dbReference>
<dbReference type="GO" id="GO:0005737">
    <property type="term" value="C:cytoplasm"/>
    <property type="evidence" value="ECO:0007005"/>
    <property type="project" value="SGD"/>
</dbReference>
<dbReference type="GO" id="GO:0005768">
    <property type="term" value="C:endosome"/>
    <property type="evidence" value="ECO:0000314"/>
    <property type="project" value="SGD"/>
</dbReference>
<dbReference type="GO" id="GO:0005802">
    <property type="term" value="C:trans-Golgi network"/>
    <property type="evidence" value="ECO:0000314"/>
    <property type="project" value="SGD"/>
</dbReference>
<dbReference type="GO" id="GO:0005096">
    <property type="term" value="F:GTPase activator activity"/>
    <property type="evidence" value="ECO:0000314"/>
    <property type="project" value="SGD"/>
</dbReference>
<dbReference type="GO" id="GO:0005543">
    <property type="term" value="F:phospholipid binding"/>
    <property type="evidence" value="ECO:0000314"/>
    <property type="project" value="SGD"/>
</dbReference>
<dbReference type="GO" id="GO:0008270">
    <property type="term" value="F:zinc ion binding"/>
    <property type="evidence" value="ECO:0007669"/>
    <property type="project" value="UniProtKB-KW"/>
</dbReference>
<dbReference type="GO" id="GO:0006888">
    <property type="term" value="P:endoplasmic reticulum to Golgi vesicle-mediated transport"/>
    <property type="evidence" value="ECO:0000316"/>
    <property type="project" value="SGD"/>
</dbReference>
<dbReference type="GO" id="GO:0006891">
    <property type="term" value="P:intra-Golgi vesicle-mediated transport"/>
    <property type="evidence" value="ECO:0000316"/>
    <property type="project" value="SGD"/>
</dbReference>
<dbReference type="GO" id="GO:0015031">
    <property type="term" value="P:protein transport"/>
    <property type="evidence" value="ECO:0007669"/>
    <property type="project" value="UniProtKB-KW"/>
</dbReference>
<dbReference type="CDD" id="cd08204">
    <property type="entry name" value="ArfGap"/>
    <property type="match status" value="1"/>
</dbReference>
<dbReference type="FunFam" id="1.10.220.150:FF:000032">
    <property type="entry name" value="ARF GAP"/>
    <property type="match status" value="1"/>
</dbReference>
<dbReference type="Gene3D" id="1.10.220.150">
    <property type="entry name" value="Arf GTPase activating protein"/>
    <property type="match status" value="1"/>
</dbReference>
<dbReference type="InterPro" id="IPR045258">
    <property type="entry name" value="ACAP1/2/3-like"/>
</dbReference>
<dbReference type="InterPro" id="IPR037278">
    <property type="entry name" value="ARFGAP/RecO"/>
</dbReference>
<dbReference type="InterPro" id="IPR001164">
    <property type="entry name" value="ArfGAP_dom"/>
</dbReference>
<dbReference type="InterPro" id="IPR038508">
    <property type="entry name" value="ArfGAP_dom_sf"/>
</dbReference>
<dbReference type="PANTHER" id="PTHR23180:SF160">
    <property type="entry name" value="ADP-RIBOSYLATION FACTOR GTPASE-ACTIVATING PROTEIN EFFECTOR PROTEIN 1"/>
    <property type="match status" value="1"/>
</dbReference>
<dbReference type="PANTHER" id="PTHR23180">
    <property type="entry name" value="CENTAURIN/ARF"/>
    <property type="match status" value="1"/>
</dbReference>
<dbReference type="Pfam" id="PF01412">
    <property type="entry name" value="ArfGap"/>
    <property type="match status" value="1"/>
</dbReference>
<dbReference type="SMART" id="SM00105">
    <property type="entry name" value="ArfGap"/>
    <property type="match status" value="1"/>
</dbReference>
<dbReference type="SUPFAM" id="SSF57863">
    <property type="entry name" value="ArfGap/RecO-like zinc finger"/>
    <property type="match status" value="1"/>
</dbReference>
<dbReference type="PROSITE" id="PS50115">
    <property type="entry name" value="ARFGAP"/>
    <property type="match status" value="1"/>
</dbReference>
<name>AGE1_YEAST</name>
<proteinExistence type="evidence at protein level"/>
<comment type="function">
    <text evidence="3 6">GTPase-activating protein (GAP) for the ADP ribosylation factors ARF1 and ARF2. May be involved in the endocytic pathway.</text>
</comment>
<comment type="subcellular location">
    <subcellularLocation>
        <location evidence="4">Cytoplasm</location>
    </subcellularLocation>
</comment>
<comment type="miscellaneous">
    <text evidence="5">Present with 396 molecules/cell in log phase SD medium.</text>
</comment>
<evidence type="ECO:0000255" key="1">
    <source>
        <dbReference type="PROSITE-ProRule" id="PRU00288"/>
    </source>
</evidence>
<evidence type="ECO:0000256" key="2">
    <source>
        <dbReference type="SAM" id="MobiDB-lite"/>
    </source>
</evidence>
<evidence type="ECO:0000269" key="3">
    <source>
    </source>
</evidence>
<evidence type="ECO:0000269" key="4">
    <source>
    </source>
</evidence>
<evidence type="ECO:0000269" key="5">
    <source>
    </source>
</evidence>
<evidence type="ECO:0000269" key="6">
    <source>
    </source>
</evidence>
<feature type="chain" id="PRO_0000074222" description="ADP-ribosylation factor GTPase-activating protein effector protein 1">
    <location>
        <begin position="1"/>
        <end position="482"/>
    </location>
</feature>
<feature type="domain" description="Arf-GAP" evidence="1">
    <location>
        <begin position="170"/>
        <end position="297"/>
    </location>
</feature>
<feature type="zinc finger region" description="C4-type" evidence="1">
    <location>
        <begin position="186"/>
        <end position="210"/>
    </location>
</feature>
<feature type="region of interest" description="Disordered" evidence="2">
    <location>
        <begin position="116"/>
        <end position="156"/>
    </location>
</feature>
<feature type="compositionally biased region" description="Basic residues" evidence="2">
    <location>
        <begin position="118"/>
        <end position="127"/>
    </location>
</feature>
<feature type="compositionally biased region" description="Low complexity" evidence="2">
    <location>
        <begin position="134"/>
        <end position="143"/>
    </location>
</feature>
<gene>
    <name type="primary">AGE1</name>
    <name type="synonym">SAT1</name>
    <name type="ordered locus">YDR524C</name>
    <name type="ORF">D9719.28</name>
</gene>
<accession>Q04412</accession>
<accession>D6VTE4</accession>
<protein>
    <recommendedName>
        <fullName>ADP-ribosylation factor GTPase-activating protein effector protein 1</fullName>
        <shortName>ARF GAP effector protein 1</shortName>
    </recommendedName>
    <alternativeName>
        <fullName>Suppressor of ARF1 thermosensitive mutant protein 1</fullName>
    </alternativeName>
</protein>
<organism>
    <name type="scientific">Saccharomyces cerevisiae (strain ATCC 204508 / S288c)</name>
    <name type="common">Baker's yeast</name>
    <dbReference type="NCBI Taxonomy" id="559292"/>
    <lineage>
        <taxon>Eukaryota</taxon>
        <taxon>Fungi</taxon>
        <taxon>Dikarya</taxon>
        <taxon>Ascomycota</taxon>
        <taxon>Saccharomycotina</taxon>
        <taxon>Saccharomycetes</taxon>
        <taxon>Saccharomycetales</taxon>
        <taxon>Saccharomycetaceae</taxon>
        <taxon>Saccharomyces</taxon>
    </lineage>
</organism>